<accession>Q8AYK6</accession>
<accession>B7ZQE2</accession>
<keyword id="KW-0025">Alternative splicing</keyword>
<keyword id="KW-0067">ATP-binding</keyword>
<keyword id="KW-0131">Cell cycle</keyword>
<keyword id="KW-0132">Cell division</keyword>
<keyword id="KW-0175">Coiled coil</keyword>
<keyword id="KW-0418">Kinase</keyword>
<keyword id="KW-0460">Magnesium</keyword>
<keyword id="KW-0479">Metal-binding</keyword>
<keyword id="KW-0498">Mitosis</keyword>
<keyword id="KW-0547">Nucleotide-binding</keyword>
<keyword id="KW-0539">Nucleus</keyword>
<keyword id="KW-1185">Reference proteome</keyword>
<keyword id="KW-0808">Transferase</keyword>
<keyword id="KW-0829">Tyrosine-protein kinase</keyword>
<sequence>MSLQPVPHRLLFSDSDDEEDGHSTGEDSAFQESDSPVSRLREKQEGPGGSWEEEEGLGSSPIKSPGHFFMCDSPTYRDLPPASPPGPAASPPDCPGTPPHKTFRKLRLFDTPHTPKSLLSKARGIGSSALRFRGGTLFREAEKLPKPEFTYSTPQVNINPFTPDSLEIQSSTGLCRRRKRALLNDSCGEDMEGSDCELEDEDVRPAKRIPITESNMKSRYATEFHELEKIGSGEFGSVFKCVKRLDGCIYAIKRSKKPMAGSVDEQNALREVYAHAVLGQHPHVVRYYSAWAEDDHMLIQNEYCNGGSLADAISENYRTMQYFTEPELKDLLLQVARGLKYIHSMSLVHMDIKPSNIFISRITVPNTGVEEGDDEDCGSGNVVYKIGDLGHVTRVSSPQVEEGDSRFLANEVLQEDYTHLAKADIFALALTVWCAAGAEPFPTNGDQWHEIRQGKLPRVPQLLSQEFVDLIKLMISPDSEKRPSSMALVKHSVLLSASRKNAEQLRIELNAEKFKNALLQKELKKAQIAKAAAEERALFPDRIATRSTTQSNRTTRLIGKKMNRSVSLTIY</sequence>
<organism>
    <name type="scientific">Xenopus laevis</name>
    <name type="common">African clawed frog</name>
    <dbReference type="NCBI Taxonomy" id="8355"/>
    <lineage>
        <taxon>Eukaryota</taxon>
        <taxon>Metazoa</taxon>
        <taxon>Chordata</taxon>
        <taxon>Craniata</taxon>
        <taxon>Vertebrata</taxon>
        <taxon>Euteleostomi</taxon>
        <taxon>Amphibia</taxon>
        <taxon>Batrachia</taxon>
        <taxon>Anura</taxon>
        <taxon>Pipoidea</taxon>
        <taxon>Pipidae</taxon>
        <taxon>Xenopodinae</taxon>
        <taxon>Xenopus</taxon>
        <taxon>Xenopus</taxon>
    </lineage>
</organism>
<proteinExistence type="evidence at transcript level"/>
<evidence type="ECO:0000250" key="1"/>
<evidence type="ECO:0000255" key="2"/>
<evidence type="ECO:0000255" key="3">
    <source>
        <dbReference type="PROSITE-ProRule" id="PRU00159"/>
    </source>
</evidence>
<evidence type="ECO:0000255" key="4">
    <source>
        <dbReference type="PROSITE-ProRule" id="PRU10027"/>
    </source>
</evidence>
<evidence type="ECO:0000256" key="5">
    <source>
        <dbReference type="SAM" id="MobiDB-lite"/>
    </source>
</evidence>
<evidence type="ECO:0000269" key="6">
    <source>
    </source>
</evidence>
<evidence type="ECO:0000269" key="7">
    <source>
    </source>
</evidence>
<evidence type="ECO:0000303" key="8">
    <source ref="2"/>
</evidence>
<evidence type="ECO:0000305" key="9">
    <source>
    </source>
</evidence>
<reference key="1">
    <citation type="journal article" date="2002" name="Dev. Biol.">
        <title>Multiple Cdk1 inhibitory kinases regulate the cell cycle during development.</title>
        <authorList>
            <person name="Leise W."/>
            <person name="Mueller P.R."/>
        </authorList>
    </citation>
    <scope>NUCLEOTIDE SEQUENCE [MRNA] (ISOFORM 1)</scope>
    <scope>FUNCTION</scope>
    <scope>TISSUE SPECIFICITY</scope>
</reference>
<reference key="2">
    <citation type="submission" date="2008-11" db="EMBL/GenBank/DDBJ databases">
        <authorList>
            <consortium name="NIH - Xenopus Gene Collection (XGC) project"/>
        </authorList>
    </citation>
    <scope>NUCLEOTIDE SEQUENCE [LARGE SCALE MRNA] (ISOFORM 2)</scope>
    <source>
        <tissue>Gastrula</tissue>
    </source>
</reference>
<reference key="3">
    <citation type="journal article" date="2004" name="Development">
        <title>Inhibition of the cell cycle is required for convergent extension of the paraxial mesoderm during Xenopus neurulation.</title>
        <authorList>
            <person name="Leise W.F. III"/>
            <person name="Mueller P.R."/>
        </authorList>
    </citation>
    <scope>FUNCTION</scope>
</reference>
<dbReference type="EC" id="2.7.10.2"/>
<dbReference type="EMBL" id="AF358869">
    <property type="protein sequence ID" value="AAN07091.1"/>
    <property type="molecule type" value="mRNA"/>
</dbReference>
<dbReference type="EMBL" id="BC169775">
    <property type="protein sequence ID" value="AAI69775.1"/>
    <property type="molecule type" value="mRNA"/>
</dbReference>
<dbReference type="RefSeq" id="NP_001082306.1">
    <molecule id="Q8AYK6-1"/>
    <property type="nucleotide sequence ID" value="NM_001088837.1"/>
</dbReference>
<dbReference type="SMR" id="Q8AYK6"/>
<dbReference type="GeneID" id="398396"/>
<dbReference type="KEGG" id="xla:398396"/>
<dbReference type="AGR" id="Xenbase:XB-GENE-17338608"/>
<dbReference type="CTD" id="398396"/>
<dbReference type="Xenbase" id="XB-GENE-17338608">
    <property type="gene designation" value="wee1.L"/>
</dbReference>
<dbReference type="OrthoDB" id="5337378at2759"/>
<dbReference type="Proteomes" id="UP000186698">
    <property type="component" value="Chromosome 4L"/>
</dbReference>
<dbReference type="Bgee" id="398396">
    <property type="expression patterns" value="Expressed in neurula embryo and 19 other cell types or tissues"/>
</dbReference>
<dbReference type="GO" id="GO:0005737">
    <property type="term" value="C:cytoplasm"/>
    <property type="evidence" value="ECO:0000318"/>
    <property type="project" value="GO_Central"/>
</dbReference>
<dbReference type="GO" id="GO:0005634">
    <property type="term" value="C:nucleus"/>
    <property type="evidence" value="ECO:0000318"/>
    <property type="project" value="GO_Central"/>
</dbReference>
<dbReference type="GO" id="GO:0005524">
    <property type="term" value="F:ATP binding"/>
    <property type="evidence" value="ECO:0007669"/>
    <property type="project" value="UniProtKB-KW"/>
</dbReference>
<dbReference type="GO" id="GO:0000287">
    <property type="term" value="F:magnesium ion binding"/>
    <property type="evidence" value="ECO:0007669"/>
    <property type="project" value="InterPro"/>
</dbReference>
<dbReference type="GO" id="GO:0004715">
    <property type="term" value="F:non-membrane spanning protein tyrosine kinase activity"/>
    <property type="evidence" value="ECO:0007669"/>
    <property type="project" value="UniProtKB-EC"/>
</dbReference>
<dbReference type="GO" id="GO:0004713">
    <property type="term" value="F:protein tyrosine kinase activity"/>
    <property type="evidence" value="ECO:0000318"/>
    <property type="project" value="GO_Central"/>
</dbReference>
<dbReference type="GO" id="GO:0051301">
    <property type="term" value="P:cell division"/>
    <property type="evidence" value="ECO:0007669"/>
    <property type="project" value="UniProtKB-KW"/>
</dbReference>
<dbReference type="GO" id="GO:0000278">
    <property type="term" value="P:mitotic cell cycle"/>
    <property type="evidence" value="ECO:0007669"/>
    <property type="project" value="InterPro"/>
</dbReference>
<dbReference type="GO" id="GO:0010972">
    <property type="term" value="P:negative regulation of G2/M transition of mitotic cell cycle"/>
    <property type="evidence" value="ECO:0000318"/>
    <property type="project" value="GO_Central"/>
</dbReference>
<dbReference type="CDD" id="cd14138">
    <property type="entry name" value="PTKc_Wee1a"/>
    <property type="match status" value="1"/>
</dbReference>
<dbReference type="FunFam" id="3.30.200.20:FF:000115">
    <property type="entry name" value="Wee1-like kinase 2"/>
    <property type="match status" value="1"/>
</dbReference>
<dbReference type="FunFam" id="1.10.510.10:FF:000217">
    <property type="entry name" value="Wee1-like protein kinase"/>
    <property type="match status" value="1"/>
</dbReference>
<dbReference type="Gene3D" id="3.30.200.20">
    <property type="entry name" value="Phosphorylase Kinase, domain 1"/>
    <property type="match status" value="1"/>
</dbReference>
<dbReference type="Gene3D" id="1.10.510.10">
    <property type="entry name" value="Transferase(Phosphotransferase) domain 1"/>
    <property type="match status" value="1"/>
</dbReference>
<dbReference type="InterPro" id="IPR050339">
    <property type="entry name" value="CC_SR_Kinase"/>
</dbReference>
<dbReference type="InterPro" id="IPR011009">
    <property type="entry name" value="Kinase-like_dom_sf"/>
</dbReference>
<dbReference type="InterPro" id="IPR000719">
    <property type="entry name" value="Prot_kinase_dom"/>
</dbReference>
<dbReference type="InterPro" id="IPR017441">
    <property type="entry name" value="Protein_kinase_ATP_BS"/>
</dbReference>
<dbReference type="InterPro" id="IPR008271">
    <property type="entry name" value="Ser/Thr_kinase_AS"/>
</dbReference>
<dbReference type="InterPro" id="IPR017164">
    <property type="entry name" value="Wee1-like_protein_kinase"/>
</dbReference>
<dbReference type="PANTHER" id="PTHR11042">
    <property type="entry name" value="EUKARYOTIC TRANSLATION INITIATION FACTOR 2-ALPHA KINASE EIF2-ALPHA KINASE -RELATED"/>
    <property type="match status" value="1"/>
</dbReference>
<dbReference type="PANTHER" id="PTHR11042:SF72">
    <property type="entry name" value="WEE1-LIKE PROTEIN KINASE"/>
    <property type="match status" value="1"/>
</dbReference>
<dbReference type="Pfam" id="PF00069">
    <property type="entry name" value="Pkinase"/>
    <property type="match status" value="1"/>
</dbReference>
<dbReference type="PIRSF" id="PIRSF037281">
    <property type="entry name" value="Wee1-like_protein_kinase"/>
    <property type="match status" value="1"/>
</dbReference>
<dbReference type="SMART" id="SM00220">
    <property type="entry name" value="S_TKc"/>
    <property type="match status" value="1"/>
</dbReference>
<dbReference type="SUPFAM" id="SSF56112">
    <property type="entry name" value="Protein kinase-like (PK-like)"/>
    <property type="match status" value="1"/>
</dbReference>
<dbReference type="PROSITE" id="PS00107">
    <property type="entry name" value="PROTEIN_KINASE_ATP"/>
    <property type="match status" value="1"/>
</dbReference>
<dbReference type="PROSITE" id="PS50011">
    <property type="entry name" value="PROTEIN_KINASE_DOM"/>
    <property type="match status" value="1"/>
</dbReference>
<dbReference type="PROSITE" id="PS00108">
    <property type="entry name" value="PROTEIN_KINASE_ST"/>
    <property type="match status" value="1"/>
</dbReference>
<protein>
    <recommendedName>
        <fullName>Wee1-like protein kinase 1-A</fullName>
        <ecNumber>2.7.10.2</ecNumber>
    </recommendedName>
    <alternativeName>
        <fullName>Zygotic wee1-like protein kinase 2</fullName>
        <shortName>XWee2</shortName>
    </alternativeName>
</protein>
<name>WEE1A_XENLA</name>
<comment type="function">
    <text evidence="6 7">Acts as a zygotic negative regulator of entry into mitosis (G2 to M transition) by protecting the nucleus from cytoplasmically activated cyclin B1-complexed cdk1 before the onset of mitosis by mediating phosphorylation of cdk1 on 'Tyr-15'. Specifically phosphorylates and inactivates cyclin B1-complexed cdk1 reaching a maximum during G2 phase and a minimum as cells enter M phase. Phosphorylation of cyclin B1-cdk1 occurs exclusively on 'Tyr-15' and phosphorylation of monomeric cdk1 does not occur. Involved in convergent extension of the paraxial mesoderm during neurulation by inhibiting the cell cycle.</text>
</comment>
<comment type="catalytic activity">
    <reaction evidence="4">
        <text>L-tyrosyl-[protein] + ATP = O-phospho-L-tyrosyl-[protein] + ADP + H(+)</text>
        <dbReference type="Rhea" id="RHEA:10596"/>
        <dbReference type="Rhea" id="RHEA-COMP:10136"/>
        <dbReference type="Rhea" id="RHEA-COMP:20101"/>
        <dbReference type="ChEBI" id="CHEBI:15378"/>
        <dbReference type="ChEBI" id="CHEBI:30616"/>
        <dbReference type="ChEBI" id="CHEBI:46858"/>
        <dbReference type="ChEBI" id="CHEBI:61978"/>
        <dbReference type="ChEBI" id="CHEBI:456216"/>
        <dbReference type="EC" id="2.7.10.2"/>
    </reaction>
</comment>
<comment type="subcellular location">
    <subcellularLocation>
        <location evidence="1">Nucleus</location>
    </subcellularLocation>
</comment>
<comment type="alternative products">
    <event type="alternative splicing"/>
    <isoform>
        <id>Q8AYK6-1</id>
        <name>1</name>
        <sequence type="displayed"/>
    </isoform>
    <isoform>
        <id>Q8AYK6-2</id>
        <name>2</name>
        <sequence type="described" ref="VSP_041323 VSP_041324"/>
    </isoform>
</comment>
<comment type="tissue specificity">
    <text evidence="6">Zygotically expressed. Expressed in regions of the embryo that are devoid of mitotic cells, such as the involuting mesoderm.</text>
</comment>
<comment type="similarity">
    <text evidence="3">Belongs to the protein kinase superfamily. Ser/Thr protein kinase family. WEE1 subfamily.</text>
</comment>
<comment type="caution">
    <text evidence="9">Was initially assigned as wee2 (PubMed:12217326). However, it corresponds to the zygotic protein WEE1 in mammals.</text>
</comment>
<gene>
    <name type="primary">wee1-a</name>
    <name type="synonym">wee2</name>
</gene>
<feature type="chain" id="PRO_0000409522" description="Wee1-like protein kinase 1-A">
    <location>
        <begin position="1"/>
        <end position="571"/>
    </location>
</feature>
<feature type="domain" description="Protein kinase" evidence="3">
    <location>
        <begin position="224"/>
        <end position="494"/>
    </location>
</feature>
<feature type="region of interest" description="Disordered" evidence="5">
    <location>
        <begin position="1"/>
        <end position="101"/>
    </location>
</feature>
<feature type="coiled-coil region" evidence="2">
    <location>
        <begin position="500"/>
        <end position="539"/>
    </location>
</feature>
<feature type="compositionally biased region" description="Pro residues" evidence="5">
    <location>
        <begin position="81"/>
        <end position="98"/>
    </location>
</feature>
<feature type="active site" description="Proton acceptor" evidence="3 4">
    <location>
        <position position="351"/>
    </location>
</feature>
<feature type="binding site" evidence="3">
    <location>
        <begin position="230"/>
        <end position="238"/>
    </location>
    <ligand>
        <name>ATP</name>
        <dbReference type="ChEBI" id="CHEBI:30616"/>
    </ligand>
</feature>
<feature type="binding site" evidence="3">
    <location>
        <position position="253"/>
    </location>
    <ligand>
        <name>ATP</name>
        <dbReference type="ChEBI" id="CHEBI:30616"/>
    </ligand>
</feature>
<feature type="binding site" evidence="1">
    <location>
        <position position="356"/>
    </location>
    <ligand>
        <name>Mg(2+)</name>
        <dbReference type="ChEBI" id="CHEBI:18420"/>
    </ligand>
</feature>
<feature type="binding site" evidence="1">
    <location>
        <position position="388"/>
    </location>
    <ligand>
        <name>Mg(2+)</name>
        <dbReference type="ChEBI" id="CHEBI:18420"/>
    </ligand>
</feature>
<feature type="splice variant" id="VSP_041323" description="In isoform 2." evidence="8">
    <original>W</original>
    <variation>WE</variation>
    <location>
        <position position="51"/>
    </location>
</feature>
<feature type="splice variant" id="VSP_041324" description="In isoform 2." evidence="8">
    <location>
        <begin position="74"/>
        <end position="84"/>
    </location>
</feature>